<comment type="function">
    <text evidence="1">This protein is one of the two subunits of integration host factor, a specific DNA-binding protein that functions in genetic recombination as well as in transcriptional and translational control.</text>
</comment>
<comment type="subunit">
    <text evidence="1">Heterodimer of an alpha and a beta chain.</text>
</comment>
<comment type="similarity">
    <text evidence="1">Belongs to the bacterial histone-like protein family.</text>
</comment>
<organism>
    <name type="scientific">Jannaschia sp. (strain CCS1)</name>
    <dbReference type="NCBI Taxonomy" id="290400"/>
    <lineage>
        <taxon>Bacteria</taxon>
        <taxon>Pseudomonadati</taxon>
        <taxon>Pseudomonadota</taxon>
        <taxon>Alphaproteobacteria</taxon>
        <taxon>Rhodobacterales</taxon>
        <taxon>Roseobacteraceae</taxon>
        <taxon>Jannaschia</taxon>
    </lineage>
</organism>
<reference key="1">
    <citation type="submission" date="2006-02" db="EMBL/GenBank/DDBJ databases">
        <title>Complete sequence of chromosome of Jannaschia sp. CCS1.</title>
        <authorList>
            <consortium name="US DOE Joint Genome Institute"/>
            <person name="Copeland A."/>
            <person name="Lucas S."/>
            <person name="Lapidus A."/>
            <person name="Barry K."/>
            <person name="Detter J.C."/>
            <person name="Glavina del Rio T."/>
            <person name="Hammon N."/>
            <person name="Israni S."/>
            <person name="Pitluck S."/>
            <person name="Brettin T."/>
            <person name="Bruce D."/>
            <person name="Han C."/>
            <person name="Tapia R."/>
            <person name="Gilna P."/>
            <person name="Chertkov O."/>
            <person name="Saunders E."/>
            <person name="Schmutz J."/>
            <person name="Larimer F."/>
            <person name="Land M."/>
            <person name="Kyrpides N."/>
            <person name="Lykidis A."/>
            <person name="Moran M.A."/>
            <person name="Belas R."/>
            <person name="Ye W."/>
            <person name="Buchan A."/>
            <person name="Gonzalez J.M."/>
            <person name="Schell M.A."/>
            <person name="Richardson P."/>
        </authorList>
    </citation>
    <scope>NUCLEOTIDE SEQUENCE [LARGE SCALE GENOMIC DNA]</scope>
    <source>
        <strain>CCS1</strain>
    </source>
</reference>
<keyword id="KW-0233">DNA recombination</keyword>
<keyword id="KW-0238">DNA-binding</keyword>
<keyword id="KW-1185">Reference proteome</keyword>
<keyword id="KW-0804">Transcription</keyword>
<keyword id="KW-0805">Transcription regulation</keyword>
<keyword id="KW-0810">Translation regulation</keyword>
<protein>
    <recommendedName>
        <fullName evidence="1">Integration host factor subunit beta</fullName>
        <shortName evidence="1">IHF-beta</shortName>
    </recommendedName>
</protein>
<gene>
    <name evidence="1" type="primary">ihfB</name>
    <name evidence="1" type="synonym">himD</name>
    <name type="ordered locus">Jann_3585</name>
</gene>
<evidence type="ECO:0000255" key="1">
    <source>
        <dbReference type="HAMAP-Rule" id="MF_00381"/>
    </source>
</evidence>
<name>IHFB_JANSC</name>
<accession>Q28LB0</accession>
<dbReference type="EMBL" id="CP000264">
    <property type="protein sequence ID" value="ABD56502.1"/>
    <property type="molecule type" value="Genomic_DNA"/>
</dbReference>
<dbReference type="RefSeq" id="WP_011456702.1">
    <property type="nucleotide sequence ID" value="NC_007802.1"/>
</dbReference>
<dbReference type="SMR" id="Q28LB0"/>
<dbReference type="STRING" id="290400.Jann_3585"/>
<dbReference type="KEGG" id="jan:Jann_3585"/>
<dbReference type="eggNOG" id="COG0776">
    <property type="taxonomic scope" value="Bacteria"/>
</dbReference>
<dbReference type="HOGENOM" id="CLU_105066_2_0_5"/>
<dbReference type="OrthoDB" id="9804203at2"/>
<dbReference type="Proteomes" id="UP000008326">
    <property type="component" value="Chromosome"/>
</dbReference>
<dbReference type="GO" id="GO:0005694">
    <property type="term" value="C:chromosome"/>
    <property type="evidence" value="ECO:0007669"/>
    <property type="project" value="InterPro"/>
</dbReference>
<dbReference type="GO" id="GO:0005829">
    <property type="term" value="C:cytosol"/>
    <property type="evidence" value="ECO:0007669"/>
    <property type="project" value="TreeGrafter"/>
</dbReference>
<dbReference type="GO" id="GO:0003677">
    <property type="term" value="F:DNA binding"/>
    <property type="evidence" value="ECO:0007669"/>
    <property type="project" value="UniProtKB-UniRule"/>
</dbReference>
<dbReference type="GO" id="GO:0030527">
    <property type="term" value="F:structural constituent of chromatin"/>
    <property type="evidence" value="ECO:0007669"/>
    <property type="project" value="InterPro"/>
</dbReference>
<dbReference type="GO" id="GO:0006310">
    <property type="term" value="P:DNA recombination"/>
    <property type="evidence" value="ECO:0007669"/>
    <property type="project" value="UniProtKB-UniRule"/>
</dbReference>
<dbReference type="GO" id="GO:0006355">
    <property type="term" value="P:regulation of DNA-templated transcription"/>
    <property type="evidence" value="ECO:0007669"/>
    <property type="project" value="UniProtKB-UniRule"/>
</dbReference>
<dbReference type="GO" id="GO:0006417">
    <property type="term" value="P:regulation of translation"/>
    <property type="evidence" value="ECO:0007669"/>
    <property type="project" value="UniProtKB-UniRule"/>
</dbReference>
<dbReference type="CDD" id="cd13836">
    <property type="entry name" value="IHF_B"/>
    <property type="match status" value="1"/>
</dbReference>
<dbReference type="Gene3D" id="4.10.520.10">
    <property type="entry name" value="IHF-like DNA-binding proteins"/>
    <property type="match status" value="1"/>
</dbReference>
<dbReference type="HAMAP" id="MF_00381">
    <property type="entry name" value="IHF_beta"/>
    <property type="match status" value="1"/>
</dbReference>
<dbReference type="InterPro" id="IPR000119">
    <property type="entry name" value="Hist_DNA-bd"/>
</dbReference>
<dbReference type="InterPro" id="IPR020816">
    <property type="entry name" value="Histone-like_DNA-bd_CS"/>
</dbReference>
<dbReference type="InterPro" id="IPR010992">
    <property type="entry name" value="IHF-like_DNA-bd_dom_sf"/>
</dbReference>
<dbReference type="InterPro" id="IPR005685">
    <property type="entry name" value="IHF_beta"/>
</dbReference>
<dbReference type="NCBIfam" id="TIGR00988">
    <property type="entry name" value="hip"/>
    <property type="match status" value="1"/>
</dbReference>
<dbReference type="NCBIfam" id="NF001222">
    <property type="entry name" value="PRK00199.1"/>
    <property type="match status" value="1"/>
</dbReference>
<dbReference type="PANTHER" id="PTHR33175">
    <property type="entry name" value="DNA-BINDING PROTEIN HU"/>
    <property type="match status" value="1"/>
</dbReference>
<dbReference type="PANTHER" id="PTHR33175:SF5">
    <property type="entry name" value="INTEGRATION HOST FACTOR SUBUNIT BETA"/>
    <property type="match status" value="1"/>
</dbReference>
<dbReference type="Pfam" id="PF00216">
    <property type="entry name" value="Bac_DNA_binding"/>
    <property type="match status" value="1"/>
</dbReference>
<dbReference type="PRINTS" id="PR01727">
    <property type="entry name" value="DNABINDINGHU"/>
</dbReference>
<dbReference type="SMART" id="SM00411">
    <property type="entry name" value="BHL"/>
    <property type="match status" value="1"/>
</dbReference>
<dbReference type="SUPFAM" id="SSF47729">
    <property type="entry name" value="IHF-like DNA-binding proteins"/>
    <property type="match status" value="1"/>
</dbReference>
<dbReference type="PROSITE" id="PS00045">
    <property type="entry name" value="HISTONE_LIKE"/>
    <property type="match status" value="1"/>
</dbReference>
<proteinExistence type="inferred from homology"/>
<feature type="chain" id="PRO_1000060613" description="Integration host factor subunit beta">
    <location>
        <begin position="1"/>
        <end position="95"/>
    </location>
</feature>
<sequence length="95" mass="10846">MIRSELIQKLSDENPHLYQRDVERIVNSIFEEVIDALAAGDRVELRGFGAFSVKKRDARIGRNPRTGESVSVEEKHVPFFKAGKLLRDRLNGHES</sequence>